<keyword id="KW-0067">ATP-binding</keyword>
<keyword id="KW-0963">Cytoplasm</keyword>
<keyword id="KW-0436">Ligase</keyword>
<keyword id="KW-0547">Nucleotide-binding</keyword>
<keyword id="KW-1185">Reference proteome</keyword>
<keyword id="KW-0819">tRNA processing</keyword>
<proteinExistence type="inferred from homology"/>
<gene>
    <name evidence="1" type="primary">tilS</name>
    <name type="ordered locus">plu0689</name>
</gene>
<evidence type="ECO:0000255" key="1">
    <source>
        <dbReference type="HAMAP-Rule" id="MF_01161"/>
    </source>
</evidence>
<comment type="function">
    <text evidence="1">Ligates lysine onto the cytidine present at position 34 of the AUA codon-specific tRNA(Ile) that contains the anticodon CAU, in an ATP-dependent manner. Cytidine is converted to lysidine, thus changing the amino acid specificity of the tRNA from methionine to isoleucine.</text>
</comment>
<comment type="catalytic activity">
    <reaction evidence="1">
        <text>cytidine(34) in tRNA(Ile2) + L-lysine + ATP = lysidine(34) in tRNA(Ile2) + AMP + diphosphate + H(+)</text>
        <dbReference type="Rhea" id="RHEA:43744"/>
        <dbReference type="Rhea" id="RHEA-COMP:10625"/>
        <dbReference type="Rhea" id="RHEA-COMP:10670"/>
        <dbReference type="ChEBI" id="CHEBI:15378"/>
        <dbReference type="ChEBI" id="CHEBI:30616"/>
        <dbReference type="ChEBI" id="CHEBI:32551"/>
        <dbReference type="ChEBI" id="CHEBI:33019"/>
        <dbReference type="ChEBI" id="CHEBI:82748"/>
        <dbReference type="ChEBI" id="CHEBI:83665"/>
        <dbReference type="ChEBI" id="CHEBI:456215"/>
        <dbReference type="EC" id="6.3.4.19"/>
    </reaction>
</comment>
<comment type="subcellular location">
    <subcellularLocation>
        <location evidence="1">Cytoplasm</location>
    </subcellularLocation>
</comment>
<comment type="domain">
    <text>The N-terminal region contains the highly conserved SGGXDS motif, predicted to be a P-loop motif involved in ATP binding.</text>
</comment>
<comment type="similarity">
    <text evidence="1">Belongs to the tRNA(Ile)-lysidine synthase family.</text>
</comment>
<protein>
    <recommendedName>
        <fullName evidence="1">tRNA(Ile)-lysidine synthase</fullName>
        <ecNumber evidence="1">6.3.4.19</ecNumber>
    </recommendedName>
    <alternativeName>
        <fullName evidence="1">tRNA(Ile)-2-lysyl-cytidine synthase</fullName>
    </alternativeName>
    <alternativeName>
        <fullName evidence="1">tRNA(Ile)-lysidine synthetase</fullName>
    </alternativeName>
</protein>
<name>TILS_PHOLL</name>
<dbReference type="EC" id="6.3.4.19" evidence="1"/>
<dbReference type="EMBL" id="BX571861">
    <property type="protein sequence ID" value="CAE12984.1"/>
    <property type="molecule type" value="Genomic_DNA"/>
</dbReference>
<dbReference type="RefSeq" id="WP_011145065.1">
    <property type="nucleotide sequence ID" value="NC_005126.1"/>
</dbReference>
<dbReference type="SMR" id="Q7N8N0"/>
<dbReference type="STRING" id="243265.plu0689"/>
<dbReference type="GeneID" id="48846978"/>
<dbReference type="KEGG" id="plu:plu0689"/>
<dbReference type="eggNOG" id="COG0037">
    <property type="taxonomic scope" value="Bacteria"/>
</dbReference>
<dbReference type="HOGENOM" id="CLU_018869_2_0_6"/>
<dbReference type="OrthoDB" id="9807403at2"/>
<dbReference type="Proteomes" id="UP000002514">
    <property type="component" value="Chromosome"/>
</dbReference>
<dbReference type="GO" id="GO:0005737">
    <property type="term" value="C:cytoplasm"/>
    <property type="evidence" value="ECO:0007669"/>
    <property type="project" value="UniProtKB-SubCell"/>
</dbReference>
<dbReference type="GO" id="GO:0005524">
    <property type="term" value="F:ATP binding"/>
    <property type="evidence" value="ECO:0007669"/>
    <property type="project" value="UniProtKB-UniRule"/>
</dbReference>
<dbReference type="GO" id="GO:0032267">
    <property type="term" value="F:tRNA(Ile)-lysidine synthase activity"/>
    <property type="evidence" value="ECO:0007669"/>
    <property type="project" value="UniProtKB-EC"/>
</dbReference>
<dbReference type="GO" id="GO:0006400">
    <property type="term" value="P:tRNA modification"/>
    <property type="evidence" value="ECO:0007669"/>
    <property type="project" value="UniProtKB-UniRule"/>
</dbReference>
<dbReference type="CDD" id="cd01992">
    <property type="entry name" value="TilS_N"/>
    <property type="match status" value="1"/>
</dbReference>
<dbReference type="Gene3D" id="1.20.59.20">
    <property type="match status" value="1"/>
</dbReference>
<dbReference type="Gene3D" id="3.40.50.620">
    <property type="entry name" value="HUPs"/>
    <property type="match status" value="1"/>
</dbReference>
<dbReference type="HAMAP" id="MF_01161">
    <property type="entry name" value="tRNA_Ile_lys_synt"/>
    <property type="match status" value="1"/>
</dbReference>
<dbReference type="InterPro" id="IPR012796">
    <property type="entry name" value="Lysidine-tRNA-synth_C"/>
</dbReference>
<dbReference type="InterPro" id="IPR014729">
    <property type="entry name" value="Rossmann-like_a/b/a_fold"/>
</dbReference>
<dbReference type="InterPro" id="IPR011063">
    <property type="entry name" value="TilS/TtcA_N"/>
</dbReference>
<dbReference type="InterPro" id="IPR012094">
    <property type="entry name" value="tRNA_Ile_lys_synt"/>
</dbReference>
<dbReference type="InterPro" id="IPR012795">
    <property type="entry name" value="tRNA_Ile_lys_synt_N"/>
</dbReference>
<dbReference type="InterPro" id="IPR015262">
    <property type="entry name" value="tRNA_Ile_lys_synt_subst-bd"/>
</dbReference>
<dbReference type="NCBIfam" id="TIGR02433">
    <property type="entry name" value="lysidine_TilS_C"/>
    <property type="match status" value="1"/>
</dbReference>
<dbReference type="NCBIfam" id="TIGR02432">
    <property type="entry name" value="lysidine_TilS_N"/>
    <property type="match status" value="1"/>
</dbReference>
<dbReference type="NCBIfam" id="NF007942">
    <property type="entry name" value="PRK10660.1"/>
    <property type="match status" value="1"/>
</dbReference>
<dbReference type="PANTHER" id="PTHR43033">
    <property type="entry name" value="TRNA(ILE)-LYSIDINE SYNTHASE-RELATED"/>
    <property type="match status" value="1"/>
</dbReference>
<dbReference type="PANTHER" id="PTHR43033:SF1">
    <property type="entry name" value="TRNA(ILE)-LYSIDINE SYNTHASE-RELATED"/>
    <property type="match status" value="1"/>
</dbReference>
<dbReference type="Pfam" id="PF01171">
    <property type="entry name" value="ATP_bind_3"/>
    <property type="match status" value="1"/>
</dbReference>
<dbReference type="Pfam" id="PF09179">
    <property type="entry name" value="TilS"/>
    <property type="match status" value="1"/>
</dbReference>
<dbReference type="Pfam" id="PF11734">
    <property type="entry name" value="TilS_C"/>
    <property type="match status" value="1"/>
</dbReference>
<dbReference type="SMART" id="SM00977">
    <property type="entry name" value="TilS_C"/>
    <property type="match status" value="1"/>
</dbReference>
<dbReference type="SUPFAM" id="SSF52402">
    <property type="entry name" value="Adenine nucleotide alpha hydrolases-like"/>
    <property type="match status" value="1"/>
</dbReference>
<dbReference type="SUPFAM" id="SSF82829">
    <property type="entry name" value="MesJ substrate recognition domain-like"/>
    <property type="match status" value="1"/>
</dbReference>
<dbReference type="SUPFAM" id="SSF56037">
    <property type="entry name" value="PheT/TilS domain"/>
    <property type="match status" value="1"/>
</dbReference>
<reference key="1">
    <citation type="journal article" date="2003" name="Nat. Biotechnol.">
        <title>The genome sequence of the entomopathogenic bacterium Photorhabdus luminescens.</title>
        <authorList>
            <person name="Duchaud E."/>
            <person name="Rusniok C."/>
            <person name="Frangeul L."/>
            <person name="Buchrieser C."/>
            <person name="Givaudan A."/>
            <person name="Taourit S."/>
            <person name="Bocs S."/>
            <person name="Boursaux-Eude C."/>
            <person name="Chandler M."/>
            <person name="Charles J.-F."/>
            <person name="Dassa E."/>
            <person name="Derose R."/>
            <person name="Derzelle S."/>
            <person name="Freyssinet G."/>
            <person name="Gaudriault S."/>
            <person name="Medigue C."/>
            <person name="Lanois A."/>
            <person name="Powell K."/>
            <person name="Siguier P."/>
            <person name="Vincent R."/>
            <person name="Wingate V."/>
            <person name="Zouine M."/>
            <person name="Glaser P."/>
            <person name="Boemare N."/>
            <person name="Danchin A."/>
            <person name="Kunst F."/>
        </authorList>
    </citation>
    <scope>NUCLEOTIDE SEQUENCE [LARGE SCALE GENOMIC DNA]</scope>
    <source>
        <strain>DSM 15139 / CIP 105565 / TT01</strain>
    </source>
</reference>
<accession>Q7N8N0</accession>
<feature type="chain" id="PRO_0000181741" description="tRNA(Ile)-lysidine synthase">
    <location>
        <begin position="1"/>
        <end position="442"/>
    </location>
</feature>
<feature type="binding site" evidence="1">
    <location>
        <begin position="27"/>
        <end position="32"/>
    </location>
    <ligand>
        <name>ATP</name>
        <dbReference type="ChEBI" id="CHEBI:30616"/>
    </ligand>
</feature>
<organism>
    <name type="scientific">Photorhabdus laumondii subsp. laumondii (strain DSM 15139 / CIP 105565 / TT01)</name>
    <name type="common">Photorhabdus luminescens subsp. laumondii</name>
    <dbReference type="NCBI Taxonomy" id="243265"/>
    <lineage>
        <taxon>Bacteria</taxon>
        <taxon>Pseudomonadati</taxon>
        <taxon>Pseudomonadota</taxon>
        <taxon>Gammaproteobacteria</taxon>
        <taxon>Enterobacterales</taxon>
        <taxon>Morganellaceae</taxon>
        <taxon>Photorhabdus</taxon>
    </lineage>
</organism>
<sequence>MANIDERLFVTLAKQLGEYKKILVGFSGGLDSSVLLHLLVNWRNQHNQKIQLRAIHIHHGLNLKADQWIEHCQLICDDWQVEFHSARVTIDARQKGIEAAARDARYQVFKSELQKDEVLVTAQHLDDQAETFLLALKRGSGPAGLASMPSIAVFADTLLLRPLLDYSRNELEKYASKHRLNWIEDDSNQDDRYDRNFLRLHIMPLLNQRWSHFPKAAARSASLCGEQEQLLDELLNESLKELITQDGALGIVSLAVCSEAKRNALLRRWFGYHGMKMPSREQLNRLWYEVALARTDAEPRLQFGKYDVRRYKQKLWLVPQWQSLRETILEWDICNTLVLPDRLGELNIADRGIQVRVPADNERVTIRFGVQGMISIVGRQHSRHSKKLWQELGVAPWLRERIPLLYYNEQLIAALGVFVTKESEAAEGRKMLTMNWHKTLLK</sequence>